<evidence type="ECO:0000255" key="1">
    <source>
        <dbReference type="HAMAP-Rule" id="MF_01810"/>
    </source>
</evidence>
<gene>
    <name evidence="1" type="primary">yidC</name>
    <name type="ordered locus">NGO_2178</name>
</gene>
<organism>
    <name type="scientific">Neisseria gonorrhoeae (strain ATCC 700825 / FA 1090)</name>
    <dbReference type="NCBI Taxonomy" id="242231"/>
    <lineage>
        <taxon>Bacteria</taxon>
        <taxon>Pseudomonadati</taxon>
        <taxon>Pseudomonadota</taxon>
        <taxon>Betaproteobacteria</taxon>
        <taxon>Neisseriales</taxon>
        <taxon>Neisseriaceae</taxon>
        <taxon>Neisseria</taxon>
    </lineage>
</organism>
<feature type="chain" id="PRO_1000070124" description="Membrane protein insertase YidC">
    <location>
        <begin position="1"/>
        <end position="545"/>
    </location>
</feature>
<feature type="transmembrane region" description="Helical" evidence="1">
    <location>
        <begin position="350"/>
        <end position="370"/>
    </location>
</feature>
<feature type="transmembrane region" description="Helical" evidence="1">
    <location>
        <begin position="424"/>
        <end position="444"/>
    </location>
</feature>
<feature type="transmembrane region" description="Helical" evidence="1">
    <location>
        <begin position="461"/>
        <end position="481"/>
    </location>
</feature>
<feature type="transmembrane region" description="Helical" evidence="1">
    <location>
        <begin position="498"/>
        <end position="518"/>
    </location>
</feature>
<dbReference type="EMBL" id="AE004969">
    <property type="protein sequence ID" value="AAW90771.1"/>
    <property type="molecule type" value="Genomic_DNA"/>
</dbReference>
<dbReference type="RefSeq" id="WP_003687191.1">
    <property type="nucleotide sequence ID" value="NC_002946.2"/>
</dbReference>
<dbReference type="RefSeq" id="YP_209183.1">
    <property type="nucleotide sequence ID" value="NC_002946.2"/>
</dbReference>
<dbReference type="SMR" id="Q5F4W6"/>
<dbReference type="STRING" id="242231.NGO_2178"/>
<dbReference type="KEGG" id="ngo:NGO_2178"/>
<dbReference type="PATRIC" id="fig|242231.10.peg.2631"/>
<dbReference type="HOGENOM" id="CLU_016535_3_0_4"/>
<dbReference type="Proteomes" id="UP000000535">
    <property type="component" value="Chromosome"/>
</dbReference>
<dbReference type="GO" id="GO:0005886">
    <property type="term" value="C:plasma membrane"/>
    <property type="evidence" value="ECO:0007669"/>
    <property type="project" value="UniProtKB-SubCell"/>
</dbReference>
<dbReference type="GO" id="GO:0032977">
    <property type="term" value="F:membrane insertase activity"/>
    <property type="evidence" value="ECO:0007669"/>
    <property type="project" value="InterPro"/>
</dbReference>
<dbReference type="GO" id="GO:0051205">
    <property type="term" value="P:protein insertion into membrane"/>
    <property type="evidence" value="ECO:0007669"/>
    <property type="project" value="TreeGrafter"/>
</dbReference>
<dbReference type="GO" id="GO:0015031">
    <property type="term" value="P:protein transport"/>
    <property type="evidence" value="ECO:0007669"/>
    <property type="project" value="UniProtKB-KW"/>
</dbReference>
<dbReference type="CDD" id="cd20070">
    <property type="entry name" value="5TM_YidC_Alb3"/>
    <property type="match status" value="1"/>
</dbReference>
<dbReference type="CDD" id="cd19961">
    <property type="entry name" value="EcYidC-like_peri"/>
    <property type="match status" value="1"/>
</dbReference>
<dbReference type="FunFam" id="2.70.98.90:FF:000003">
    <property type="entry name" value="Membrane protein insertase YidC"/>
    <property type="match status" value="1"/>
</dbReference>
<dbReference type="Gene3D" id="2.70.98.90">
    <property type="match status" value="1"/>
</dbReference>
<dbReference type="HAMAP" id="MF_01810">
    <property type="entry name" value="YidC_type1"/>
    <property type="match status" value="1"/>
</dbReference>
<dbReference type="InterPro" id="IPR019998">
    <property type="entry name" value="Membr_insert_YidC"/>
</dbReference>
<dbReference type="InterPro" id="IPR028053">
    <property type="entry name" value="Membr_insert_YidC_N"/>
</dbReference>
<dbReference type="InterPro" id="IPR001708">
    <property type="entry name" value="YidC/ALB3/OXA1/COX18"/>
</dbReference>
<dbReference type="InterPro" id="IPR028055">
    <property type="entry name" value="YidC/Oxa/ALB_C"/>
</dbReference>
<dbReference type="InterPro" id="IPR047196">
    <property type="entry name" value="YidC_ALB_C"/>
</dbReference>
<dbReference type="InterPro" id="IPR038221">
    <property type="entry name" value="YidC_periplasmic_sf"/>
</dbReference>
<dbReference type="NCBIfam" id="NF002352">
    <property type="entry name" value="PRK01318.1-3"/>
    <property type="match status" value="1"/>
</dbReference>
<dbReference type="NCBIfam" id="TIGR03593">
    <property type="entry name" value="yidC_nterm"/>
    <property type="match status" value="1"/>
</dbReference>
<dbReference type="NCBIfam" id="TIGR03592">
    <property type="entry name" value="yidC_oxa1_cterm"/>
    <property type="match status" value="1"/>
</dbReference>
<dbReference type="PANTHER" id="PTHR12428:SF65">
    <property type="entry name" value="CYTOCHROME C OXIDASE ASSEMBLY PROTEIN COX18, MITOCHONDRIAL"/>
    <property type="match status" value="1"/>
</dbReference>
<dbReference type="PANTHER" id="PTHR12428">
    <property type="entry name" value="OXA1"/>
    <property type="match status" value="1"/>
</dbReference>
<dbReference type="Pfam" id="PF02096">
    <property type="entry name" value="60KD_IMP"/>
    <property type="match status" value="1"/>
</dbReference>
<dbReference type="Pfam" id="PF14849">
    <property type="entry name" value="YidC_periplas"/>
    <property type="match status" value="1"/>
</dbReference>
<dbReference type="PRINTS" id="PR00701">
    <property type="entry name" value="60KDINNERMP"/>
</dbReference>
<dbReference type="PRINTS" id="PR01900">
    <property type="entry name" value="YIDCPROTEIN"/>
</dbReference>
<name>YIDC_NEIG1</name>
<comment type="function">
    <text evidence="1">Required for the insertion and/or proper folding and/or complex formation of integral membrane proteins into the membrane. Involved in integration of membrane proteins that insert both dependently and independently of the Sec translocase complex, as well as at least some lipoproteins. Aids folding of multispanning membrane proteins.</text>
</comment>
<comment type="subunit">
    <text evidence="1">Interacts with the Sec translocase complex via SecD. Specifically interacts with transmembrane segments of nascent integral membrane proteins during membrane integration.</text>
</comment>
<comment type="subcellular location">
    <subcellularLocation>
        <location evidence="1">Cell inner membrane</location>
        <topology evidence="1">Multi-pass membrane protein</topology>
    </subcellularLocation>
</comment>
<comment type="similarity">
    <text evidence="1">Belongs to the OXA1/ALB3/YidC family. Type 1 subfamily.</text>
</comment>
<protein>
    <recommendedName>
        <fullName evidence="1">Membrane protein insertase YidC</fullName>
    </recommendedName>
    <alternativeName>
        <fullName evidence="1">Foldase YidC</fullName>
    </alternativeName>
    <alternativeName>
        <fullName evidence="1">Membrane integrase YidC</fullName>
    </alternativeName>
    <alternativeName>
        <fullName evidence="1">Membrane protein YidC</fullName>
    </alternativeName>
</protein>
<sequence length="545" mass="60541">MDFKRLTAFFAIALVIMIGWEKMFPTPKPVPAPQQAAQKQAATASAEAALAPATPITVTTDTVQAVIDEKSGDLRRLTLLKYKATGDENKPFVLFGDGKEYTYVAQSELLDAQGNNILKGIGFSAPKKQYTLNGDTVEVRLSAPETNGLKIDKVYTFTKDSYLVNVRFDIANGSGQTANLSADYRIVRDHSEPEGQGYFTHSYVGPVVYTPEGNFQKVSFSDLDDDAKSGKSEAEYIRKTPTGWLGMIEHHFMSTWILQPKGGQSVCAAGDCRIDIKRRSDKLYSASVSVPLAAIQAGAKAETAVNLYAGPQTTSVIANIADNLQLAKDYGKVHWFASPLFWLLNQLHNIIGNWGWAIVVLTIIVKAVLYPLTNASYRSMAKMRAAAPKLQTIKEKYGDDRMAQQQAMMQLYKDEKINPLGGCLPMLLQIPVFIGLYWALFASVELRQAPWLGWITDLSRADPYYILPIIMAATMFAQTYLNPPPTDPMQAKMMKIMPLVFSVMFFFFPAGLVLYWVVNNLLTIAQQWHINRSIEKQRAQGEVVS</sequence>
<accession>Q5F4W6</accession>
<keyword id="KW-0997">Cell inner membrane</keyword>
<keyword id="KW-1003">Cell membrane</keyword>
<keyword id="KW-0143">Chaperone</keyword>
<keyword id="KW-0472">Membrane</keyword>
<keyword id="KW-0653">Protein transport</keyword>
<keyword id="KW-1185">Reference proteome</keyword>
<keyword id="KW-0812">Transmembrane</keyword>
<keyword id="KW-1133">Transmembrane helix</keyword>
<keyword id="KW-0813">Transport</keyword>
<reference key="1">
    <citation type="submission" date="2003-03" db="EMBL/GenBank/DDBJ databases">
        <title>The complete genome sequence of Neisseria gonorrhoeae.</title>
        <authorList>
            <person name="Lewis L.A."/>
            <person name="Gillaspy A.F."/>
            <person name="McLaughlin R.E."/>
            <person name="Gipson M."/>
            <person name="Ducey T.F."/>
            <person name="Ownbey T."/>
            <person name="Hartman K."/>
            <person name="Nydick C."/>
            <person name="Carson M.B."/>
            <person name="Vaughn J."/>
            <person name="Thomson C."/>
            <person name="Song L."/>
            <person name="Lin S."/>
            <person name="Yuan X."/>
            <person name="Najar F."/>
            <person name="Zhan M."/>
            <person name="Ren Q."/>
            <person name="Zhu H."/>
            <person name="Qi S."/>
            <person name="Kenton S.M."/>
            <person name="Lai H."/>
            <person name="White J.D."/>
            <person name="Clifton S."/>
            <person name="Roe B.A."/>
            <person name="Dyer D.W."/>
        </authorList>
    </citation>
    <scope>NUCLEOTIDE SEQUENCE [LARGE SCALE GENOMIC DNA]</scope>
    <source>
        <strain>ATCC 700825 / FA 1090</strain>
    </source>
</reference>
<proteinExistence type="inferred from homology"/>